<dbReference type="EC" id="4.3.2.10" evidence="1"/>
<dbReference type="EMBL" id="CP000668">
    <property type="protein sequence ID" value="ABP39820.1"/>
    <property type="molecule type" value="Genomic_DNA"/>
</dbReference>
<dbReference type="RefSeq" id="WP_011906253.1">
    <property type="nucleotide sequence ID" value="NZ_CP009715.1"/>
</dbReference>
<dbReference type="SMR" id="A4TKK8"/>
<dbReference type="KEGG" id="ypp:YPDSF_1433"/>
<dbReference type="PATRIC" id="fig|386656.14.peg.2351"/>
<dbReference type="UniPathway" id="UPA00031">
    <property type="reaction ID" value="UER00010"/>
</dbReference>
<dbReference type="GO" id="GO:0005737">
    <property type="term" value="C:cytoplasm"/>
    <property type="evidence" value="ECO:0007669"/>
    <property type="project" value="UniProtKB-SubCell"/>
</dbReference>
<dbReference type="GO" id="GO:0000107">
    <property type="term" value="F:imidazoleglycerol-phosphate synthase activity"/>
    <property type="evidence" value="ECO:0007669"/>
    <property type="project" value="UniProtKB-UniRule"/>
</dbReference>
<dbReference type="GO" id="GO:0016829">
    <property type="term" value="F:lyase activity"/>
    <property type="evidence" value="ECO:0007669"/>
    <property type="project" value="UniProtKB-KW"/>
</dbReference>
<dbReference type="GO" id="GO:0000105">
    <property type="term" value="P:L-histidine biosynthetic process"/>
    <property type="evidence" value="ECO:0007669"/>
    <property type="project" value="UniProtKB-UniRule"/>
</dbReference>
<dbReference type="CDD" id="cd04731">
    <property type="entry name" value="HisF"/>
    <property type="match status" value="1"/>
</dbReference>
<dbReference type="FunFam" id="3.20.20.70:FF:000006">
    <property type="entry name" value="Imidazole glycerol phosphate synthase subunit HisF"/>
    <property type="match status" value="1"/>
</dbReference>
<dbReference type="Gene3D" id="3.20.20.70">
    <property type="entry name" value="Aldolase class I"/>
    <property type="match status" value="1"/>
</dbReference>
<dbReference type="HAMAP" id="MF_01013">
    <property type="entry name" value="HisF"/>
    <property type="match status" value="1"/>
</dbReference>
<dbReference type="InterPro" id="IPR013785">
    <property type="entry name" value="Aldolase_TIM"/>
</dbReference>
<dbReference type="InterPro" id="IPR006062">
    <property type="entry name" value="His_biosynth"/>
</dbReference>
<dbReference type="InterPro" id="IPR004651">
    <property type="entry name" value="HisF"/>
</dbReference>
<dbReference type="InterPro" id="IPR050064">
    <property type="entry name" value="IGPS_HisA/HisF"/>
</dbReference>
<dbReference type="InterPro" id="IPR011060">
    <property type="entry name" value="RibuloseP-bd_barrel"/>
</dbReference>
<dbReference type="NCBIfam" id="TIGR00735">
    <property type="entry name" value="hisF"/>
    <property type="match status" value="1"/>
</dbReference>
<dbReference type="PANTHER" id="PTHR21235:SF2">
    <property type="entry name" value="IMIDAZOLE GLYCEROL PHOSPHATE SYNTHASE HISHF"/>
    <property type="match status" value="1"/>
</dbReference>
<dbReference type="PANTHER" id="PTHR21235">
    <property type="entry name" value="IMIDAZOLE GLYCEROL PHOSPHATE SYNTHASE SUBUNIT HISF/H IGP SYNTHASE SUBUNIT HISF/H"/>
    <property type="match status" value="1"/>
</dbReference>
<dbReference type="Pfam" id="PF00977">
    <property type="entry name" value="His_biosynth"/>
    <property type="match status" value="1"/>
</dbReference>
<dbReference type="SUPFAM" id="SSF51366">
    <property type="entry name" value="Ribulose-phoshate binding barrel"/>
    <property type="match status" value="1"/>
</dbReference>
<gene>
    <name evidence="1" type="primary">hisF</name>
    <name type="ordered locus">YPDSF_1433</name>
</gene>
<sequence length="258" mass="28510">MLAKRIIPCLDVKDGQVVKGVQFRNHEIIGDIVPLAQRYAQEGADELVFYDITASSDGRVVDKSWVARVAEVIDIPFCVAGGIKSVEDASQILTFGADKISINSPALADPTLITRLADRYGVQCIVVGIDTWYDTESDSYQVYQFTGDEKRTKATTWQTEDWVKEVQLRGAGEIVLNMMNQDGVRNGYDLRQLQQMRAICHVPLIASGGAGTPDHFLEAFRDADVDGALAASVFHKKIINIGELKKYLSEQGVEIRVC</sequence>
<keyword id="KW-0028">Amino-acid biosynthesis</keyword>
<keyword id="KW-0963">Cytoplasm</keyword>
<keyword id="KW-0368">Histidine biosynthesis</keyword>
<keyword id="KW-0456">Lyase</keyword>
<proteinExistence type="inferred from homology"/>
<feature type="chain" id="PRO_1000063177" description="Imidazole glycerol phosphate synthase subunit HisF">
    <location>
        <begin position="1"/>
        <end position="258"/>
    </location>
</feature>
<feature type="active site" evidence="1">
    <location>
        <position position="11"/>
    </location>
</feature>
<feature type="active site" evidence="1">
    <location>
        <position position="130"/>
    </location>
</feature>
<reference key="1">
    <citation type="submission" date="2007-02" db="EMBL/GenBank/DDBJ databases">
        <title>Complete sequence of chromosome of Yersinia pestis Pestoides F.</title>
        <authorList>
            <consortium name="US DOE Joint Genome Institute"/>
            <person name="Copeland A."/>
            <person name="Lucas S."/>
            <person name="Lapidus A."/>
            <person name="Barry K."/>
            <person name="Detter J.C."/>
            <person name="Glavina del Rio T."/>
            <person name="Hammon N."/>
            <person name="Israni S."/>
            <person name="Dalin E."/>
            <person name="Tice H."/>
            <person name="Pitluck S."/>
            <person name="Di Bartolo G."/>
            <person name="Chain P."/>
            <person name="Malfatti S."/>
            <person name="Shin M."/>
            <person name="Vergez L."/>
            <person name="Schmutz J."/>
            <person name="Larimer F."/>
            <person name="Land M."/>
            <person name="Hauser L."/>
            <person name="Worsham P."/>
            <person name="Chu M."/>
            <person name="Bearden S."/>
            <person name="Garcia E."/>
            <person name="Richardson P."/>
        </authorList>
    </citation>
    <scope>NUCLEOTIDE SEQUENCE [LARGE SCALE GENOMIC DNA]</scope>
    <source>
        <strain>Pestoides F</strain>
    </source>
</reference>
<accession>A4TKK8</accession>
<protein>
    <recommendedName>
        <fullName evidence="1">Imidazole glycerol phosphate synthase subunit HisF</fullName>
        <ecNumber evidence="1">4.3.2.10</ecNumber>
    </recommendedName>
    <alternativeName>
        <fullName evidence="1">IGP synthase cyclase subunit</fullName>
    </alternativeName>
    <alternativeName>
        <fullName evidence="1">IGP synthase subunit HisF</fullName>
    </alternativeName>
    <alternativeName>
        <fullName evidence="1">ImGP synthase subunit HisF</fullName>
        <shortName evidence="1">IGPS subunit HisF</shortName>
    </alternativeName>
</protein>
<evidence type="ECO:0000255" key="1">
    <source>
        <dbReference type="HAMAP-Rule" id="MF_01013"/>
    </source>
</evidence>
<organism>
    <name type="scientific">Yersinia pestis (strain Pestoides F)</name>
    <dbReference type="NCBI Taxonomy" id="386656"/>
    <lineage>
        <taxon>Bacteria</taxon>
        <taxon>Pseudomonadati</taxon>
        <taxon>Pseudomonadota</taxon>
        <taxon>Gammaproteobacteria</taxon>
        <taxon>Enterobacterales</taxon>
        <taxon>Yersiniaceae</taxon>
        <taxon>Yersinia</taxon>
    </lineage>
</organism>
<name>HIS6_YERPP</name>
<comment type="function">
    <text evidence="1">IGPS catalyzes the conversion of PRFAR and glutamine to IGP, AICAR and glutamate. The HisF subunit catalyzes the cyclization activity that produces IGP and AICAR from PRFAR using the ammonia provided by the HisH subunit.</text>
</comment>
<comment type="catalytic activity">
    <reaction evidence="1">
        <text>5-[(5-phospho-1-deoxy-D-ribulos-1-ylimino)methylamino]-1-(5-phospho-beta-D-ribosyl)imidazole-4-carboxamide + L-glutamine = D-erythro-1-(imidazol-4-yl)glycerol 3-phosphate + 5-amino-1-(5-phospho-beta-D-ribosyl)imidazole-4-carboxamide + L-glutamate + H(+)</text>
        <dbReference type="Rhea" id="RHEA:24793"/>
        <dbReference type="ChEBI" id="CHEBI:15378"/>
        <dbReference type="ChEBI" id="CHEBI:29985"/>
        <dbReference type="ChEBI" id="CHEBI:58278"/>
        <dbReference type="ChEBI" id="CHEBI:58359"/>
        <dbReference type="ChEBI" id="CHEBI:58475"/>
        <dbReference type="ChEBI" id="CHEBI:58525"/>
        <dbReference type="EC" id="4.3.2.10"/>
    </reaction>
</comment>
<comment type="pathway">
    <text evidence="1">Amino-acid biosynthesis; L-histidine biosynthesis; L-histidine from 5-phospho-alpha-D-ribose 1-diphosphate: step 5/9.</text>
</comment>
<comment type="subunit">
    <text evidence="1">Heterodimer of HisH and HisF.</text>
</comment>
<comment type="subcellular location">
    <subcellularLocation>
        <location evidence="1">Cytoplasm</location>
    </subcellularLocation>
</comment>
<comment type="similarity">
    <text evidence="1">Belongs to the HisA/HisF family.</text>
</comment>